<gene>
    <name evidence="1" type="primary">psbK</name>
</gene>
<geneLocation type="chloroplast"/>
<evidence type="ECO:0000255" key="1">
    <source>
        <dbReference type="HAMAP-Rule" id="MF_00441"/>
    </source>
</evidence>
<evidence type="ECO:0000269" key="2">
    <source>
    </source>
</evidence>
<evidence type="ECO:0000305" key="3">
    <source>
    </source>
</evidence>
<name>PSBK_HORVU</name>
<comment type="function">
    <text evidence="1">One of the components of the core complex of photosystem II (PSII). PSII is a light-driven water:plastoquinone oxidoreductase that uses light energy to abstract electrons from H(2)O, generating O(2) and a proton gradient subsequently used for ATP formation. It consists of a core antenna complex that captures photons, and an electron transfer chain that converts photonic excitation into a charge separation.</text>
</comment>
<comment type="subunit">
    <text evidence="1 2">PSII is composed of 1 copy each of membrane proteins PsbA, PsbB, PsbC, PsbD, PsbE, PsbF, PsbH, PsbI, PsbJ, PsbK, PsbL, PsbM, PsbT, PsbX, PsbY, PsbZ, Psb30/Ycf12, at least 3 peripheral proteins of the oxygen-evolving complex and a large number of cofactors. It forms dimeric complexes (By similarity). Detected in both etioplasts and green leaves; PSII is only assembled in green leaves (PubMed:19137553).</text>
</comment>
<comment type="subcellular location">
    <subcellularLocation>
        <location evidence="1 3">Plastid</location>
        <location evidence="1 3">Chloroplast thylakoid membrane</location>
        <topology evidence="1 3">Single-pass membrane protein</topology>
    </subcellularLocation>
</comment>
<comment type="similarity">
    <text evidence="1">Belongs to the PsbK family.</text>
</comment>
<dbReference type="EMBL" id="X52765">
    <property type="protein sequence ID" value="CAA36975.1"/>
    <property type="molecule type" value="Genomic_DNA"/>
</dbReference>
<dbReference type="EMBL" id="EF115541">
    <property type="protein sequence ID" value="ABK79396.1"/>
    <property type="molecule type" value="Genomic_DNA"/>
</dbReference>
<dbReference type="PIR" id="S28768">
    <property type="entry name" value="S28768"/>
</dbReference>
<dbReference type="RefSeq" id="YP_010144408.1">
    <property type="nucleotide sequence ID" value="NC_056985.1"/>
</dbReference>
<dbReference type="RefSeq" id="YP_874636.1">
    <property type="nucleotide sequence ID" value="NC_008590.1"/>
</dbReference>
<dbReference type="SMR" id="P69693"/>
<dbReference type="GeneID" id="4525148"/>
<dbReference type="GeneID" id="67140726"/>
<dbReference type="GO" id="GO:0009535">
    <property type="term" value="C:chloroplast thylakoid membrane"/>
    <property type="evidence" value="ECO:0007669"/>
    <property type="project" value="UniProtKB-SubCell"/>
</dbReference>
<dbReference type="GO" id="GO:0009539">
    <property type="term" value="C:photosystem II reaction center"/>
    <property type="evidence" value="ECO:0007669"/>
    <property type="project" value="InterPro"/>
</dbReference>
<dbReference type="GO" id="GO:0015979">
    <property type="term" value="P:photosynthesis"/>
    <property type="evidence" value="ECO:0007669"/>
    <property type="project" value="UniProtKB-UniRule"/>
</dbReference>
<dbReference type="HAMAP" id="MF_00441">
    <property type="entry name" value="PSII_PsbK"/>
    <property type="match status" value="1"/>
</dbReference>
<dbReference type="InterPro" id="IPR003687">
    <property type="entry name" value="PSII_PsbK"/>
</dbReference>
<dbReference type="InterPro" id="IPR037270">
    <property type="entry name" value="PSII_PsbK_sf"/>
</dbReference>
<dbReference type="NCBIfam" id="NF002715">
    <property type="entry name" value="PRK02553.1"/>
    <property type="match status" value="1"/>
</dbReference>
<dbReference type="PANTHER" id="PTHR35325">
    <property type="match status" value="1"/>
</dbReference>
<dbReference type="PANTHER" id="PTHR35325:SF1">
    <property type="entry name" value="PHOTOSYSTEM II REACTION CENTER PROTEIN K"/>
    <property type="match status" value="1"/>
</dbReference>
<dbReference type="Pfam" id="PF02533">
    <property type="entry name" value="PsbK"/>
    <property type="match status" value="1"/>
</dbReference>
<dbReference type="SUPFAM" id="SSF161037">
    <property type="entry name" value="Photosystem II reaction center protein K, PsbK"/>
    <property type="match status" value="1"/>
</dbReference>
<protein>
    <recommendedName>
        <fullName evidence="1">Photosystem II reaction center protein K</fullName>
        <shortName evidence="1">PSII-K</shortName>
    </recommendedName>
</protein>
<keyword id="KW-0150">Chloroplast</keyword>
<keyword id="KW-0472">Membrane</keyword>
<keyword id="KW-0602">Photosynthesis</keyword>
<keyword id="KW-0604">Photosystem II</keyword>
<keyword id="KW-0934">Plastid</keyword>
<keyword id="KW-0674">Reaction center</keyword>
<keyword id="KW-0793">Thylakoid</keyword>
<keyword id="KW-0812">Transmembrane</keyword>
<keyword id="KW-1133">Transmembrane helix</keyword>
<reference key="1">
    <citation type="journal article" date="1990" name="Curr. Genet.">
        <title>Sequence and transcriptional analysis of the barley ctDNA region upstream of psbD-psbC encoding trnK(UUU), rps16, trnQ(UUG), psbK, psbI, and trnS(GCU).</title>
        <authorList>
            <person name="Sexton T.B."/>
            <person name="Jones J.T."/>
            <person name="Mullet J.E."/>
        </authorList>
    </citation>
    <scope>NUCLEOTIDE SEQUENCE [GENOMIC DNA]</scope>
    <source>
        <tissue>Seedling</tissue>
    </source>
</reference>
<reference key="2">
    <citation type="journal article" date="2007" name="Theor. Appl. Genet.">
        <title>Complete chloroplast genome sequences of Hordeum vulgare, Sorghum bicolor and Agrostis stolonifera, and comparative analyses with other grass genomes.</title>
        <authorList>
            <person name="Saski C."/>
            <person name="Lee S.-B."/>
            <person name="Fjellheim S."/>
            <person name="Guda C."/>
            <person name="Jansen R.K."/>
            <person name="Luo H."/>
            <person name="Tomkins J."/>
            <person name="Rognli O.A."/>
            <person name="Daniell H."/>
            <person name="Clarke J.L."/>
        </authorList>
    </citation>
    <scope>NUCLEOTIDE SEQUENCE [LARGE SCALE GENOMIC DNA]</scope>
    <source>
        <strain>cv. Morex</strain>
    </source>
</reference>
<reference key="3">
    <citation type="journal article" date="2009" name="Proteomics">
        <title>Mass spectrometric characterization of membrane integral low molecular weight proteins from photosystem II in barley etioplasts.</title>
        <authorList>
            <person name="Ploescher M."/>
            <person name="Granvogl B."/>
            <person name="Zoryan M."/>
            <person name="Reisinger V."/>
            <person name="Eichacker L.A."/>
        </authorList>
    </citation>
    <scope>IDENTIFICATION BY MASS SPECTROMETRY</scope>
    <scope>SUBUNIT</scope>
    <scope>SUBCELLULAR LOCATION</scope>
    <source>
        <strain>cv. Steffi</strain>
    </source>
</reference>
<organism>
    <name type="scientific">Hordeum vulgare</name>
    <name type="common">Barley</name>
    <dbReference type="NCBI Taxonomy" id="4513"/>
    <lineage>
        <taxon>Eukaryota</taxon>
        <taxon>Viridiplantae</taxon>
        <taxon>Streptophyta</taxon>
        <taxon>Embryophyta</taxon>
        <taxon>Tracheophyta</taxon>
        <taxon>Spermatophyta</taxon>
        <taxon>Magnoliopsida</taxon>
        <taxon>Liliopsida</taxon>
        <taxon>Poales</taxon>
        <taxon>Poaceae</taxon>
        <taxon>BOP clade</taxon>
        <taxon>Pooideae</taxon>
        <taxon>Triticodae</taxon>
        <taxon>Triticeae</taxon>
        <taxon>Hordeinae</taxon>
        <taxon>Hordeum</taxon>
    </lineage>
</organism>
<proteinExistence type="evidence at protein level"/>
<feature type="propeptide" id="PRO_0000029475" evidence="1">
    <location>
        <begin position="1"/>
        <end position="24"/>
    </location>
</feature>
<feature type="chain" id="PRO_0000029476" description="Photosystem II reaction center protein K" evidence="1">
    <location>
        <begin position="25"/>
        <end position="61"/>
    </location>
</feature>
<feature type="transmembrane region" description="Helical" evidence="1">
    <location>
        <begin position="32"/>
        <end position="52"/>
    </location>
</feature>
<accession>P69693</accession>
<accession>A1E9H4</accession>
<accession>P25877</accession>
<sequence>MPNILSLTCICFNSVLYPTSFFFAKLPEAYAIFNPIVDIMPVIPLFFFLLAFVWQAAVSFR</sequence>